<protein>
    <recommendedName>
        <fullName evidence="2">CTP synthase</fullName>
        <ecNumber evidence="2">6.3.4.2</ecNumber>
    </recommendedName>
    <alternativeName>
        <fullName evidence="2">Cytidine 5'-triphosphate synthase</fullName>
    </alternativeName>
    <alternativeName>
        <fullName evidence="2">Cytidine triphosphate synthetase</fullName>
        <shortName evidence="2">CTP synthetase</shortName>
        <shortName evidence="2">CTPS</shortName>
    </alternativeName>
    <alternativeName>
        <fullName evidence="2">UTP--ammonia ligase</fullName>
    </alternativeName>
</protein>
<comment type="function">
    <text evidence="2">Catalyzes the ATP-dependent amination of UTP to CTP with either L-glutamine or ammonia as the source of nitrogen. Regulates intracellular CTP levels through interactions with the four ribonucleotide triphosphates.</text>
</comment>
<comment type="catalytic activity">
    <reaction evidence="2">
        <text>UTP + L-glutamine + ATP + H2O = CTP + L-glutamate + ADP + phosphate + 2 H(+)</text>
        <dbReference type="Rhea" id="RHEA:26426"/>
        <dbReference type="ChEBI" id="CHEBI:15377"/>
        <dbReference type="ChEBI" id="CHEBI:15378"/>
        <dbReference type="ChEBI" id="CHEBI:29985"/>
        <dbReference type="ChEBI" id="CHEBI:30616"/>
        <dbReference type="ChEBI" id="CHEBI:37563"/>
        <dbReference type="ChEBI" id="CHEBI:43474"/>
        <dbReference type="ChEBI" id="CHEBI:46398"/>
        <dbReference type="ChEBI" id="CHEBI:58359"/>
        <dbReference type="ChEBI" id="CHEBI:456216"/>
        <dbReference type="EC" id="6.3.4.2"/>
    </reaction>
</comment>
<comment type="catalytic activity">
    <reaction evidence="2">
        <text>L-glutamine + H2O = L-glutamate + NH4(+)</text>
        <dbReference type="Rhea" id="RHEA:15889"/>
        <dbReference type="ChEBI" id="CHEBI:15377"/>
        <dbReference type="ChEBI" id="CHEBI:28938"/>
        <dbReference type="ChEBI" id="CHEBI:29985"/>
        <dbReference type="ChEBI" id="CHEBI:58359"/>
    </reaction>
</comment>
<comment type="catalytic activity">
    <reaction evidence="2">
        <text>UTP + NH4(+) + ATP = CTP + ADP + phosphate + 2 H(+)</text>
        <dbReference type="Rhea" id="RHEA:16597"/>
        <dbReference type="ChEBI" id="CHEBI:15378"/>
        <dbReference type="ChEBI" id="CHEBI:28938"/>
        <dbReference type="ChEBI" id="CHEBI:30616"/>
        <dbReference type="ChEBI" id="CHEBI:37563"/>
        <dbReference type="ChEBI" id="CHEBI:43474"/>
        <dbReference type="ChEBI" id="CHEBI:46398"/>
        <dbReference type="ChEBI" id="CHEBI:456216"/>
    </reaction>
</comment>
<comment type="activity regulation">
    <text evidence="2">Allosterically activated by GTP, when glutamine is the substrate; GTP has no effect on the reaction when ammonia is the substrate. The allosteric effector GTP functions by stabilizing the protein conformation that binds the tetrahedral intermediate(s) formed during glutamine hydrolysis. Inhibited by the product CTP, via allosteric rather than competitive inhibition.</text>
</comment>
<comment type="pathway">
    <text evidence="2">Pyrimidine metabolism; CTP biosynthesis via de novo pathway; CTP from UDP: step 2/2.</text>
</comment>
<comment type="subunit">
    <text evidence="2">Homotetramer.</text>
</comment>
<comment type="miscellaneous">
    <text evidence="2">CTPSs have evolved a hybrid strategy for distinguishing between UTP and CTP. The overlapping regions of the product feedback inhibitory and substrate sites recognize a common feature in both compounds, the triphosphate moiety. To differentiate isosteric substrate and product pyrimidine rings, an additional pocket far from the expected kinase/ligase catalytic site, specifically recognizes the cytosine and ribose portions of the product inhibitor.</text>
</comment>
<comment type="similarity">
    <text evidence="2">Belongs to the CTP synthase family.</text>
</comment>
<feature type="initiator methionine" description="Removed" evidence="1">
    <location>
        <position position="1"/>
    </location>
</feature>
<feature type="chain" id="PRO_0000138184" description="CTP synthase">
    <location>
        <begin position="2"/>
        <end position="545"/>
    </location>
</feature>
<feature type="domain" description="Glutamine amidotransferase type-1" evidence="2">
    <location>
        <begin position="291"/>
        <end position="542"/>
    </location>
</feature>
<feature type="region of interest" description="Amidoligase domain" evidence="2">
    <location>
        <begin position="2"/>
        <end position="266"/>
    </location>
</feature>
<feature type="active site" description="Nucleophile; for glutamine hydrolysis" evidence="2">
    <location>
        <position position="379"/>
    </location>
</feature>
<feature type="active site" evidence="2">
    <location>
        <position position="515"/>
    </location>
</feature>
<feature type="active site" evidence="2">
    <location>
        <position position="517"/>
    </location>
</feature>
<feature type="binding site" evidence="2">
    <location>
        <position position="14"/>
    </location>
    <ligand>
        <name>CTP</name>
        <dbReference type="ChEBI" id="CHEBI:37563"/>
        <note>allosteric inhibitor</note>
    </ligand>
</feature>
<feature type="binding site" evidence="2">
    <location>
        <position position="14"/>
    </location>
    <ligand>
        <name>UTP</name>
        <dbReference type="ChEBI" id="CHEBI:46398"/>
    </ligand>
</feature>
<feature type="binding site" evidence="2">
    <location>
        <begin position="15"/>
        <end position="20"/>
    </location>
    <ligand>
        <name>ATP</name>
        <dbReference type="ChEBI" id="CHEBI:30616"/>
    </ligand>
</feature>
<feature type="binding site" evidence="2">
    <location>
        <position position="72"/>
    </location>
    <ligand>
        <name>ATP</name>
        <dbReference type="ChEBI" id="CHEBI:30616"/>
    </ligand>
</feature>
<feature type="binding site" evidence="2">
    <location>
        <position position="72"/>
    </location>
    <ligand>
        <name>Mg(2+)</name>
        <dbReference type="ChEBI" id="CHEBI:18420"/>
    </ligand>
</feature>
<feature type="binding site" evidence="2">
    <location>
        <position position="140"/>
    </location>
    <ligand>
        <name>Mg(2+)</name>
        <dbReference type="ChEBI" id="CHEBI:18420"/>
    </ligand>
</feature>
<feature type="binding site" evidence="2">
    <location>
        <begin position="147"/>
        <end position="149"/>
    </location>
    <ligand>
        <name>CTP</name>
        <dbReference type="ChEBI" id="CHEBI:37563"/>
        <note>allosteric inhibitor</note>
    </ligand>
</feature>
<feature type="binding site" evidence="2">
    <location>
        <begin position="187"/>
        <end position="192"/>
    </location>
    <ligand>
        <name>CTP</name>
        <dbReference type="ChEBI" id="CHEBI:37563"/>
        <note>allosteric inhibitor</note>
    </ligand>
</feature>
<feature type="binding site" evidence="2">
    <location>
        <begin position="187"/>
        <end position="192"/>
    </location>
    <ligand>
        <name>UTP</name>
        <dbReference type="ChEBI" id="CHEBI:46398"/>
    </ligand>
</feature>
<feature type="binding site" evidence="2">
    <location>
        <position position="223"/>
    </location>
    <ligand>
        <name>CTP</name>
        <dbReference type="ChEBI" id="CHEBI:37563"/>
        <note>allosteric inhibitor</note>
    </ligand>
</feature>
<feature type="binding site" evidence="2">
    <location>
        <position position="223"/>
    </location>
    <ligand>
        <name>UTP</name>
        <dbReference type="ChEBI" id="CHEBI:46398"/>
    </ligand>
</feature>
<feature type="binding site" evidence="2">
    <location>
        <begin position="239"/>
        <end position="241"/>
    </location>
    <ligand>
        <name>ATP</name>
        <dbReference type="ChEBI" id="CHEBI:30616"/>
    </ligand>
</feature>
<feature type="binding site" evidence="2">
    <location>
        <position position="352"/>
    </location>
    <ligand>
        <name>L-glutamine</name>
        <dbReference type="ChEBI" id="CHEBI:58359"/>
    </ligand>
</feature>
<feature type="binding site" evidence="2">
    <location>
        <begin position="380"/>
        <end position="383"/>
    </location>
    <ligand>
        <name>L-glutamine</name>
        <dbReference type="ChEBI" id="CHEBI:58359"/>
    </ligand>
</feature>
<feature type="binding site" evidence="2">
    <location>
        <position position="403"/>
    </location>
    <ligand>
        <name>L-glutamine</name>
        <dbReference type="ChEBI" id="CHEBI:58359"/>
    </ligand>
</feature>
<feature type="binding site" evidence="2">
    <location>
        <position position="470"/>
    </location>
    <ligand>
        <name>L-glutamine</name>
        <dbReference type="ChEBI" id="CHEBI:58359"/>
    </ligand>
</feature>
<reference key="1">
    <citation type="journal article" date="2001" name="Nature">
        <title>Genome sequence of enterohaemorrhagic Escherichia coli O157:H7.</title>
        <authorList>
            <person name="Perna N.T."/>
            <person name="Plunkett G. III"/>
            <person name="Burland V."/>
            <person name="Mau B."/>
            <person name="Glasner J.D."/>
            <person name="Rose D.J."/>
            <person name="Mayhew G.F."/>
            <person name="Evans P.S."/>
            <person name="Gregor J."/>
            <person name="Kirkpatrick H.A."/>
            <person name="Posfai G."/>
            <person name="Hackett J."/>
            <person name="Klink S."/>
            <person name="Boutin A."/>
            <person name="Shao Y."/>
            <person name="Miller L."/>
            <person name="Grotbeck E.J."/>
            <person name="Davis N.W."/>
            <person name="Lim A."/>
            <person name="Dimalanta E.T."/>
            <person name="Potamousis K."/>
            <person name="Apodaca J."/>
            <person name="Anantharaman T.S."/>
            <person name="Lin J."/>
            <person name="Yen G."/>
            <person name="Schwartz D.C."/>
            <person name="Welch R.A."/>
            <person name="Blattner F.R."/>
        </authorList>
    </citation>
    <scope>NUCLEOTIDE SEQUENCE [LARGE SCALE GENOMIC DNA]</scope>
    <source>
        <strain>O157:H7 / EDL933 / ATCC 700927 / EHEC</strain>
    </source>
</reference>
<reference key="2">
    <citation type="journal article" date="2001" name="DNA Res.">
        <title>Complete genome sequence of enterohemorrhagic Escherichia coli O157:H7 and genomic comparison with a laboratory strain K-12.</title>
        <authorList>
            <person name="Hayashi T."/>
            <person name="Makino K."/>
            <person name="Ohnishi M."/>
            <person name="Kurokawa K."/>
            <person name="Ishii K."/>
            <person name="Yokoyama K."/>
            <person name="Han C.-G."/>
            <person name="Ohtsubo E."/>
            <person name="Nakayama K."/>
            <person name="Murata T."/>
            <person name="Tanaka M."/>
            <person name="Tobe T."/>
            <person name="Iida T."/>
            <person name="Takami H."/>
            <person name="Honda T."/>
            <person name="Sasakawa C."/>
            <person name="Ogasawara N."/>
            <person name="Yasunaga T."/>
            <person name="Kuhara S."/>
            <person name="Shiba T."/>
            <person name="Hattori M."/>
            <person name="Shinagawa H."/>
        </authorList>
    </citation>
    <scope>NUCLEOTIDE SEQUENCE [LARGE SCALE GENOMIC DNA]</scope>
    <source>
        <strain>O157:H7 / Sakai / RIMD 0509952 / EHEC</strain>
    </source>
</reference>
<proteinExistence type="inferred from homology"/>
<evidence type="ECO:0000250" key="1"/>
<evidence type="ECO:0000255" key="2">
    <source>
        <dbReference type="HAMAP-Rule" id="MF_01227"/>
    </source>
</evidence>
<accession>P0A7E7</accession>
<accession>P08398</accession>
<sequence>MTTNYIFVTGGVVSSLGKGIAAASLAAILEARGLNVTIMKLDPYINVDPGTMSPIQHGEVFVTEDGAETDLDLGHYERFIRTKMSRRNNFTTGRIYSDVLRKERRGDYLGATVQVIPHITNAIKERVLEGGEGHDVVLVEIGGTVGDIESLPFLEAIRQMAVEIGREHTLFMHLTLVPYMAASGEVKTKPTQHSVKELLSIGIQPDILICRSDRAVPANERAKIALFCNVPEKAVISLKDVDSIYKIPGLLKSQGLDDYICKRFSLNCPEANLSEWEQVIFEEANPVSEVTIGMVGKYIELPDAYKSVIEALKHGGLKNRVSVNIKLIDSQDVETRGVEILKGLDAILVPGGFGYRGVEGMITTARFARENNIPYLGICLGMQVALIDYARHVANMENANSTEFVPDCKYPVVALITEWRDENGNVEVRSEKSDLGGTMRLGAQQCQLVDDSLVRQLYNAPTIVERHRHRYEVNNMLLKQIEDAGLRVAGRSGDDQLVEIIEVPNHPWFVACQFHPEFTSTPRDGHPLFAGFVKAASEFQKRQAK</sequence>
<dbReference type="EC" id="6.3.4.2" evidence="2"/>
<dbReference type="EMBL" id="AE005174">
    <property type="protein sequence ID" value="AAG57893.1"/>
    <property type="molecule type" value="Genomic_DNA"/>
</dbReference>
<dbReference type="EMBL" id="BA000007">
    <property type="protein sequence ID" value="BAB37063.1"/>
    <property type="molecule type" value="Genomic_DNA"/>
</dbReference>
<dbReference type="PIR" id="A85929">
    <property type="entry name" value="A85929"/>
</dbReference>
<dbReference type="PIR" id="H91083">
    <property type="entry name" value="H91083"/>
</dbReference>
<dbReference type="RefSeq" id="NP_311667.1">
    <property type="nucleotide sequence ID" value="NC_002695.1"/>
</dbReference>
<dbReference type="RefSeq" id="WP_000210878.1">
    <property type="nucleotide sequence ID" value="NZ_VOAI01000003.1"/>
</dbReference>
<dbReference type="SMR" id="P0A7E7"/>
<dbReference type="STRING" id="155864.Z4095"/>
<dbReference type="MEROPS" id="C26.964"/>
<dbReference type="GeneID" id="914930"/>
<dbReference type="GeneID" id="93779218"/>
<dbReference type="KEGG" id="ece:Z4095"/>
<dbReference type="KEGG" id="ecs:ECs_3640"/>
<dbReference type="PATRIC" id="fig|386585.9.peg.3804"/>
<dbReference type="eggNOG" id="COG0504">
    <property type="taxonomic scope" value="Bacteria"/>
</dbReference>
<dbReference type="HOGENOM" id="CLU_011675_5_0_6"/>
<dbReference type="OMA" id="EFNNAYR"/>
<dbReference type="UniPathway" id="UPA00159">
    <property type="reaction ID" value="UER00277"/>
</dbReference>
<dbReference type="Proteomes" id="UP000000558">
    <property type="component" value="Chromosome"/>
</dbReference>
<dbReference type="Proteomes" id="UP000002519">
    <property type="component" value="Chromosome"/>
</dbReference>
<dbReference type="GO" id="GO:0005829">
    <property type="term" value="C:cytosol"/>
    <property type="evidence" value="ECO:0007669"/>
    <property type="project" value="TreeGrafter"/>
</dbReference>
<dbReference type="GO" id="GO:0005524">
    <property type="term" value="F:ATP binding"/>
    <property type="evidence" value="ECO:0007669"/>
    <property type="project" value="UniProtKB-KW"/>
</dbReference>
<dbReference type="GO" id="GO:0003883">
    <property type="term" value="F:CTP synthase activity"/>
    <property type="evidence" value="ECO:0007669"/>
    <property type="project" value="UniProtKB-UniRule"/>
</dbReference>
<dbReference type="GO" id="GO:0004359">
    <property type="term" value="F:glutaminase activity"/>
    <property type="evidence" value="ECO:0007669"/>
    <property type="project" value="RHEA"/>
</dbReference>
<dbReference type="GO" id="GO:0042802">
    <property type="term" value="F:identical protein binding"/>
    <property type="evidence" value="ECO:0007669"/>
    <property type="project" value="TreeGrafter"/>
</dbReference>
<dbReference type="GO" id="GO:0046872">
    <property type="term" value="F:metal ion binding"/>
    <property type="evidence" value="ECO:0007669"/>
    <property type="project" value="UniProtKB-KW"/>
</dbReference>
<dbReference type="GO" id="GO:0044210">
    <property type="term" value="P:'de novo' CTP biosynthetic process"/>
    <property type="evidence" value="ECO:0007669"/>
    <property type="project" value="UniProtKB-UniRule"/>
</dbReference>
<dbReference type="GO" id="GO:0019856">
    <property type="term" value="P:pyrimidine nucleobase biosynthetic process"/>
    <property type="evidence" value="ECO:0007669"/>
    <property type="project" value="TreeGrafter"/>
</dbReference>
<dbReference type="CDD" id="cd03113">
    <property type="entry name" value="CTPS_N"/>
    <property type="match status" value="1"/>
</dbReference>
<dbReference type="CDD" id="cd01746">
    <property type="entry name" value="GATase1_CTP_Synthase"/>
    <property type="match status" value="1"/>
</dbReference>
<dbReference type="FunFam" id="3.40.50.300:FF:000009">
    <property type="entry name" value="CTP synthase"/>
    <property type="match status" value="1"/>
</dbReference>
<dbReference type="FunFam" id="3.40.50.880:FF:000002">
    <property type="entry name" value="CTP synthase"/>
    <property type="match status" value="1"/>
</dbReference>
<dbReference type="Gene3D" id="3.40.50.880">
    <property type="match status" value="1"/>
</dbReference>
<dbReference type="Gene3D" id="3.40.50.300">
    <property type="entry name" value="P-loop containing nucleotide triphosphate hydrolases"/>
    <property type="match status" value="1"/>
</dbReference>
<dbReference type="HAMAP" id="MF_01227">
    <property type="entry name" value="PyrG"/>
    <property type="match status" value="1"/>
</dbReference>
<dbReference type="InterPro" id="IPR029062">
    <property type="entry name" value="Class_I_gatase-like"/>
</dbReference>
<dbReference type="InterPro" id="IPR004468">
    <property type="entry name" value="CTP_synthase"/>
</dbReference>
<dbReference type="InterPro" id="IPR017456">
    <property type="entry name" value="CTP_synthase_N"/>
</dbReference>
<dbReference type="InterPro" id="IPR017926">
    <property type="entry name" value="GATASE"/>
</dbReference>
<dbReference type="InterPro" id="IPR033828">
    <property type="entry name" value="GATase1_CTP_Synthase"/>
</dbReference>
<dbReference type="InterPro" id="IPR027417">
    <property type="entry name" value="P-loop_NTPase"/>
</dbReference>
<dbReference type="NCBIfam" id="NF003792">
    <property type="entry name" value="PRK05380.1"/>
    <property type="match status" value="1"/>
</dbReference>
<dbReference type="NCBIfam" id="TIGR00337">
    <property type="entry name" value="PyrG"/>
    <property type="match status" value="1"/>
</dbReference>
<dbReference type="PANTHER" id="PTHR11550">
    <property type="entry name" value="CTP SYNTHASE"/>
    <property type="match status" value="1"/>
</dbReference>
<dbReference type="PANTHER" id="PTHR11550:SF0">
    <property type="entry name" value="CTP SYNTHASE-RELATED"/>
    <property type="match status" value="1"/>
</dbReference>
<dbReference type="Pfam" id="PF06418">
    <property type="entry name" value="CTP_synth_N"/>
    <property type="match status" value="1"/>
</dbReference>
<dbReference type="Pfam" id="PF00117">
    <property type="entry name" value="GATase"/>
    <property type="match status" value="1"/>
</dbReference>
<dbReference type="SUPFAM" id="SSF52317">
    <property type="entry name" value="Class I glutamine amidotransferase-like"/>
    <property type="match status" value="1"/>
</dbReference>
<dbReference type="SUPFAM" id="SSF52540">
    <property type="entry name" value="P-loop containing nucleoside triphosphate hydrolases"/>
    <property type="match status" value="1"/>
</dbReference>
<dbReference type="PROSITE" id="PS51273">
    <property type="entry name" value="GATASE_TYPE_1"/>
    <property type="match status" value="1"/>
</dbReference>
<organism>
    <name type="scientific">Escherichia coli O157:H7</name>
    <dbReference type="NCBI Taxonomy" id="83334"/>
    <lineage>
        <taxon>Bacteria</taxon>
        <taxon>Pseudomonadati</taxon>
        <taxon>Pseudomonadota</taxon>
        <taxon>Gammaproteobacteria</taxon>
        <taxon>Enterobacterales</taxon>
        <taxon>Enterobacteriaceae</taxon>
        <taxon>Escherichia</taxon>
    </lineage>
</organism>
<gene>
    <name evidence="2" type="primary">pyrG</name>
    <name type="ordered locus">Z4095</name>
    <name type="ordered locus">ECs3640</name>
</gene>
<keyword id="KW-0067">ATP-binding</keyword>
<keyword id="KW-0315">Glutamine amidotransferase</keyword>
<keyword id="KW-0436">Ligase</keyword>
<keyword id="KW-0460">Magnesium</keyword>
<keyword id="KW-0479">Metal-binding</keyword>
<keyword id="KW-0547">Nucleotide-binding</keyword>
<keyword id="KW-0665">Pyrimidine biosynthesis</keyword>
<keyword id="KW-1185">Reference proteome</keyword>
<name>PYRG_ECO57</name>